<protein>
    <recommendedName>
        <fullName evidence="1">Uracil phosphoribosyltransferase</fullName>
        <ecNumber evidence="1">2.4.2.9</ecNumber>
    </recommendedName>
    <alternativeName>
        <fullName evidence="1">UMP pyrophosphorylase</fullName>
    </alternativeName>
    <alternativeName>
        <fullName evidence="1">UPRTase</fullName>
    </alternativeName>
</protein>
<sequence>MKIVEVRHPLVQHKIGLLRDAALSTKGFRELVTELGTLLAYEATANLDTESHTQPGWAGPVTVQRIAGAKITLVPILRAGLGMLPGVLALIPAARVSVVGLQRDEETLQPVPYFERLTGRLEERDALILDPMLATGGTLIATIDMLKRAGARRIKGIFLVAAPEGLKALEAAHPDVEVYTAAIDDHLNDKGYILPGLGDAGDRIFGTRLE</sequence>
<organism>
    <name type="scientific">Xanthomonas axonopodis pv. citri (strain 306)</name>
    <dbReference type="NCBI Taxonomy" id="190486"/>
    <lineage>
        <taxon>Bacteria</taxon>
        <taxon>Pseudomonadati</taxon>
        <taxon>Pseudomonadota</taxon>
        <taxon>Gammaproteobacteria</taxon>
        <taxon>Lysobacterales</taxon>
        <taxon>Lysobacteraceae</taxon>
        <taxon>Xanthomonas</taxon>
    </lineage>
</organism>
<gene>
    <name evidence="1" type="primary">upp</name>
    <name type="ordered locus">XAC2521</name>
</gene>
<evidence type="ECO:0000255" key="1">
    <source>
        <dbReference type="HAMAP-Rule" id="MF_01218"/>
    </source>
</evidence>
<proteinExistence type="inferred from homology"/>
<keyword id="KW-0021">Allosteric enzyme</keyword>
<keyword id="KW-0328">Glycosyltransferase</keyword>
<keyword id="KW-0342">GTP-binding</keyword>
<keyword id="KW-0460">Magnesium</keyword>
<keyword id="KW-0547">Nucleotide-binding</keyword>
<keyword id="KW-0808">Transferase</keyword>
<accession>P59001</accession>
<reference key="1">
    <citation type="journal article" date="2002" name="Nature">
        <title>Comparison of the genomes of two Xanthomonas pathogens with differing host specificities.</title>
        <authorList>
            <person name="da Silva A.C.R."/>
            <person name="Ferro J.A."/>
            <person name="Reinach F.C."/>
            <person name="Farah C.S."/>
            <person name="Furlan L.R."/>
            <person name="Quaggio R.B."/>
            <person name="Monteiro-Vitorello C.B."/>
            <person name="Van Sluys M.A."/>
            <person name="Almeida N.F. Jr."/>
            <person name="Alves L.M.C."/>
            <person name="do Amaral A.M."/>
            <person name="Bertolini M.C."/>
            <person name="Camargo L.E.A."/>
            <person name="Camarotte G."/>
            <person name="Cannavan F."/>
            <person name="Cardozo J."/>
            <person name="Chambergo F."/>
            <person name="Ciapina L.P."/>
            <person name="Cicarelli R.M.B."/>
            <person name="Coutinho L.L."/>
            <person name="Cursino-Santos J.R."/>
            <person name="El-Dorry H."/>
            <person name="Faria J.B."/>
            <person name="Ferreira A.J.S."/>
            <person name="Ferreira R.C.C."/>
            <person name="Ferro M.I.T."/>
            <person name="Formighieri E.F."/>
            <person name="Franco M.C."/>
            <person name="Greggio C.C."/>
            <person name="Gruber A."/>
            <person name="Katsuyama A.M."/>
            <person name="Kishi L.T."/>
            <person name="Leite R.P."/>
            <person name="Lemos E.G.M."/>
            <person name="Lemos M.V.F."/>
            <person name="Locali E.C."/>
            <person name="Machado M.A."/>
            <person name="Madeira A.M.B.N."/>
            <person name="Martinez-Rossi N.M."/>
            <person name="Martins E.C."/>
            <person name="Meidanis J."/>
            <person name="Menck C.F.M."/>
            <person name="Miyaki C.Y."/>
            <person name="Moon D.H."/>
            <person name="Moreira L.M."/>
            <person name="Novo M.T.M."/>
            <person name="Okura V.K."/>
            <person name="Oliveira M.C."/>
            <person name="Oliveira V.R."/>
            <person name="Pereira H.A."/>
            <person name="Rossi A."/>
            <person name="Sena J.A.D."/>
            <person name="Silva C."/>
            <person name="de Souza R.F."/>
            <person name="Spinola L.A.F."/>
            <person name="Takita M.A."/>
            <person name="Tamura R.E."/>
            <person name="Teixeira E.C."/>
            <person name="Tezza R.I.D."/>
            <person name="Trindade dos Santos M."/>
            <person name="Truffi D."/>
            <person name="Tsai S.M."/>
            <person name="White F.F."/>
            <person name="Setubal J.C."/>
            <person name="Kitajima J.P."/>
        </authorList>
    </citation>
    <scope>NUCLEOTIDE SEQUENCE [LARGE SCALE GENOMIC DNA]</scope>
    <source>
        <strain>306</strain>
    </source>
</reference>
<dbReference type="EC" id="2.4.2.9" evidence="1"/>
<dbReference type="EMBL" id="AE008923">
    <property type="protein sequence ID" value="AAM37372.1"/>
    <property type="molecule type" value="Genomic_DNA"/>
</dbReference>
<dbReference type="RefSeq" id="WP_003489787.1">
    <property type="nucleotide sequence ID" value="NC_003919.1"/>
</dbReference>
<dbReference type="SMR" id="P59001"/>
<dbReference type="GeneID" id="66911628"/>
<dbReference type="KEGG" id="xac:XAC2521"/>
<dbReference type="eggNOG" id="COG0035">
    <property type="taxonomic scope" value="Bacteria"/>
</dbReference>
<dbReference type="HOGENOM" id="CLU_067096_2_2_6"/>
<dbReference type="UniPathway" id="UPA00574">
    <property type="reaction ID" value="UER00636"/>
</dbReference>
<dbReference type="Proteomes" id="UP000000576">
    <property type="component" value="Chromosome"/>
</dbReference>
<dbReference type="GO" id="GO:0005525">
    <property type="term" value="F:GTP binding"/>
    <property type="evidence" value="ECO:0007669"/>
    <property type="project" value="UniProtKB-KW"/>
</dbReference>
<dbReference type="GO" id="GO:0000287">
    <property type="term" value="F:magnesium ion binding"/>
    <property type="evidence" value="ECO:0007669"/>
    <property type="project" value="UniProtKB-UniRule"/>
</dbReference>
<dbReference type="GO" id="GO:0004845">
    <property type="term" value="F:uracil phosphoribosyltransferase activity"/>
    <property type="evidence" value="ECO:0007669"/>
    <property type="project" value="UniProtKB-UniRule"/>
</dbReference>
<dbReference type="GO" id="GO:0044206">
    <property type="term" value="P:UMP salvage"/>
    <property type="evidence" value="ECO:0007669"/>
    <property type="project" value="UniProtKB-UniRule"/>
</dbReference>
<dbReference type="GO" id="GO:0006223">
    <property type="term" value="P:uracil salvage"/>
    <property type="evidence" value="ECO:0007669"/>
    <property type="project" value="InterPro"/>
</dbReference>
<dbReference type="CDD" id="cd06223">
    <property type="entry name" value="PRTases_typeI"/>
    <property type="match status" value="1"/>
</dbReference>
<dbReference type="FunFam" id="3.40.50.2020:FF:000003">
    <property type="entry name" value="Uracil phosphoribosyltransferase"/>
    <property type="match status" value="1"/>
</dbReference>
<dbReference type="Gene3D" id="3.40.50.2020">
    <property type="match status" value="1"/>
</dbReference>
<dbReference type="HAMAP" id="MF_01218_B">
    <property type="entry name" value="Upp_B"/>
    <property type="match status" value="1"/>
</dbReference>
<dbReference type="InterPro" id="IPR000836">
    <property type="entry name" value="PRibTrfase_dom"/>
</dbReference>
<dbReference type="InterPro" id="IPR029057">
    <property type="entry name" value="PRTase-like"/>
</dbReference>
<dbReference type="InterPro" id="IPR034332">
    <property type="entry name" value="Upp_B"/>
</dbReference>
<dbReference type="InterPro" id="IPR050054">
    <property type="entry name" value="UPRTase/APRTase"/>
</dbReference>
<dbReference type="InterPro" id="IPR005765">
    <property type="entry name" value="Ura_phspho_trans"/>
</dbReference>
<dbReference type="NCBIfam" id="NF001097">
    <property type="entry name" value="PRK00129.1"/>
    <property type="match status" value="1"/>
</dbReference>
<dbReference type="NCBIfam" id="TIGR01091">
    <property type="entry name" value="upp"/>
    <property type="match status" value="1"/>
</dbReference>
<dbReference type="PANTHER" id="PTHR32315">
    <property type="entry name" value="ADENINE PHOSPHORIBOSYLTRANSFERASE"/>
    <property type="match status" value="1"/>
</dbReference>
<dbReference type="PANTHER" id="PTHR32315:SF4">
    <property type="entry name" value="URACIL PHOSPHORIBOSYLTRANSFERASE, CHLOROPLASTIC"/>
    <property type="match status" value="1"/>
</dbReference>
<dbReference type="Pfam" id="PF14681">
    <property type="entry name" value="UPRTase"/>
    <property type="match status" value="1"/>
</dbReference>
<dbReference type="SUPFAM" id="SSF53271">
    <property type="entry name" value="PRTase-like"/>
    <property type="match status" value="1"/>
</dbReference>
<feature type="chain" id="PRO_0000120913" description="Uracil phosphoribosyltransferase">
    <location>
        <begin position="1"/>
        <end position="210"/>
    </location>
</feature>
<feature type="binding site" evidence="1">
    <location>
        <position position="78"/>
    </location>
    <ligand>
        <name>5-phospho-alpha-D-ribose 1-diphosphate</name>
        <dbReference type="ChEBI" id="CHEBI:58017"/>
    </ligand>
</feature>
<feature type="binding site" evidence="1">
    <location>
        <position position="103"/>
    </location>
    <ligand>
        <name>5-phospho-alpha-D-ribose 1-diphosphate</name>
        <dbReference type="ChEBI" id="CHEBI:58017"/>
    </ligand>
</feature>
<feature type="binding site" evidence="1">
    <location>
        <begin position="130"/>
        <end position="138"/>
    </location>
    <ligand>
        <name>5-phospho-alpha-D-ribose 1-diphosphate</name>
        <dbReference type="ChEBI" id="CHEBI:58017"/>
    </ligand>
</feature>
<feature type="binding site" evidence="1">
    <location>
        <position position="193"/>
    </location>
    <ligand>
        <name>uracil</name>
        <dbReference type="ChEBI" id="CHEBI:17568"/>
    </ligand>
</feature>
<feature type="binding site" evidence="1">
    <location>
        <begin position="198"/>
        <end position="200"/>
    </location>
    <ligand>
        <name>uracil</name>
        <dbReference type="ChEBI" id="CHEBI:17568"/>
    </ligand>
</feature>
<feature type="binding site" evidence="1">
    <location>
        <position position="199"/>
    </location>
    <ligand>
        <name>5-phospho-alpha-D-ribose 1-diphosphate</name>
        <dbReference type="ChEBI" id="CHEBI:58017"/>
    </ligand>
</feature>
<name>UPP_XANAC</name>
<comment type="function">
    <text evidence="1">Catalyzes the conversion of uracil and 5-phospho-alpha-D-ribose 1-diphosphate (PRPP) to UMP and diphosphate.</text>
</comment>
<comment type="catalytic activity">
    <reaction evidence="1">
        <text>UMP + diphosphate = 5-phospho-alpha-D-ribose 1-diphosphate + uracil</text>
        <dbReference type="Rhea" id="RHEA:13017"/>
        <dbReference type="ChEBI" id="CHEBI:17568"/>
        <dbReference type="ChEBI" id="CHEBI:33019"/>
        <dbReference type="ChEBI" id="CHEBI:57865"/>
        <dbReference type="ChEBI" id="CHEBI:58017"/>
        <dbReference type="EC" id="2.4.2.9"/>
    </reaction>
</comment>
<comment type="cofactor">
    <cofactor evidence="1">
        <name>Mg(2+)</name>
        <dbReference type="ChEBI" id="CHEBI:18420"/>
    </cofactor>
    <text evidence="1">Binds 1 Mg(2+) ion per subunit. The magnesium is bound as Mg-PRPP.</text>
</comment>
<comment type="activity regulation">
    <text evidence="1">Allosterically activated by GTP.</text>
</comment>
<comment type="pathway">
    <text evidence="1">Pyrimidine metabolism; UMP biosynthesis via salvage pathway; UMP from uracil: step 1/1.</text>
</comment>
<comment type="similarity">
    <text evidence="1">Belongs to the UPRTase family.</text>
</comment>